<proteinExistence type="inferred from homology"/>
<comment type="function">
    <text>Destroys superoxide anion radicals which are normally produced within the cells and which are toxic to biological systems.</text>
</comment>
<comment type="catalytic activity">
    <reaction>
        <text>2 superoxide + 2 H(+) = H2O2 + O2</text>
        <dbReference type="Rhea" id="RHEA:20696"/>
        <dbReference type="ChEBI" id="CHEBI:15378"/>
        <dbReference type="ChEBI" id="CHEBI:15379"/>
        <dbReference type="ChEBI" id="CHEBI:16240"/>
        <dbReference type="ChEBI" id="CHEBI:18421"/>
        <dbReference type="EC" id="1.15.1.1"/>
    </reaction>
</comment>
<comment type="cofactor">
    <cofactor evidence="1">
        <name>Mn(2+)</name>
        <dbReference type="ChEBI" id="CHEBI:29035"/>
    </cofactor>
    <text evidence="1">Binds 1 Mn(2+) ion per subunit.</text>
</comment>
<comment type="subunit">
    <text evidence="1">Homodimer.</text>
</comment>
<comment type="similarity">
    <text evidence="2">Belongs to the iron/manganese superoxide dismutase family.</text>
</comment>
<sequence>MPHTLPALPYAYDALEPHIDAQTMEIHHTKHHQTYVNGLNAAIEGTEWAEWPVEKLVGAVKQLPESLRGAVTNHGGGHANHSLFWTVMSPQGGGEPHGQLAQAIASQLGGFDAFKEAFTKAALTRFGSGWAWLSVTPQKTLVVESSGNQDSPLMFGNTPIFGLDVWEHAYYLKYQNRRPEYIGAFYNVIDWAEVERRYLEALK</sequence>
<organism>
    <name type="scientific">Pseudomonas putida</name>
    <name type="common">Arthrobacter siderocapsulatus</name>
    <dbReference type="NCBI Taxonomy" id="303"/>
    <lineage>
        <taxon>Bacteria</taxon>
        <taxon>Pseudomonadati</taxon>
        <taxon>Pseudomonadota</taxon>
        <taxon>Gammaproteobacteria</taxon>
        <taxon>Pseudomonadales</taxon>
        <taxon>Pseudomonadaceae</taxon>
        <taxon>Pseudomonas</taxon>
    </lineage>
</organism>
<feature type="chain" id="PRO_0000160068" description="Superoxide dismutase [Mn]">
    <location>
        <begin position="1"/>
        <end position="203"/>
    </location>
</feature>
<feature type="binding site" evidence="1">
    <location>
        <position position="27"/>
    </location>
    <ligand>
        <name>Mn(2+)</name>
        <dbReference type="ChEBI" id="CHEBI:29035"/>
    </ligand>
</feature>
<feature type="binding site" evidence="1">
    <location>
        <position position="81"/>
    </location>
    <ligand>
        <name>Mn(2+)</name>
        <dbReference type="ChEBI" id="CHEBI:29035"/>
    </ligand>
</feature>
<feature type="binding site" evidence="1">
    <location>
        <position position="164"/>
    </location>
    <ligand>
        <name>Mn(2+)</name>
        <dbReference type="ChEBI" id="CHEBI:29035"/>
    </ligand>
</feature>
<feature type="binding site" evidence="1">
    <location>
        <position position="168"/>
    </location>
    <ligand>
        <name>Mn(2+)</name>
        <dbReference type="ChEBI" id="CHEBI:29035"/>
    </ligand>
</feature>
<protein>
    <recommendedName>
        <fullName>Superoxide dismutase [Mn]</fullName>
        <ecNumber>1.15.1.1</ecNumber>
    </recommendedName>
</protein>
<name>SODM_PSEPU</name>
<dbReference type="EC" id="1.15.1.1"/>
<dbReference type="EMBL" id="AF102270">
    <property type="protein sequence ID" value="AAB06333.1"/>
    <property type="molecule type" value="Genomic_DNA"/>
</dbReference>
<dbReference type="SMR" id="P77929"/>
<dbReference type="GO" id="GO:0005737">
    <property type="term" value="C:cytoplasm"/>
    <property type="evidence" value="ECO:0007669"/>
    <property type="project" value="TreeGrafter"/>
</dbReference>
<dbReference type="GO" id="GO:0046872">
    <property type="term" value="F:metal ion binding"/>
    <property type="evidence" value="ECO:0007669"/>
    <property type="project" value="UniProtKB-KW"/>
</dbReference>
<dbReference type="GO" id="GO:0004784">
    <property type="term" value="F:superoxide dismutase activity"/>
    <property type="evidence" value="ECO:0007669"/>
    <property type="project" value="UniProtKB-EC"/>
</dbReference>
<dbReference type="FunFam" id="1.10.287.990:FF:000001">
    <property type="entry name" value="Superoxide dismutase"/>
    <property type="match status" value="1"/>
</dbReference>
<dbReference type="FunFam" id="3.55.40.20:FF:000001">
    <property type="entry name" value="Superoxide dismutase"/>
    <property type="match status" value="1"/>
</dbReference>
<dbReference type="Gene3D" id="1.10.287.990">
    <property type="entry name" value="Fe,Mn superoxide dismutase (SOD) domain"/>
    <property type="match status" value="1"/>
</dbReference>
<dbReference type="Gene3D" id="3.55.40.20">
    <property type="entry name" value="Iron/manganese superoxide dismutase, C-terminal domain"/>
    <property type="match status" value="1"/>
</dbReference>
<dbReference type="InterPro" id="IPR001189">
    <property type="entry name" value="Mn/Fe_SOD"/>
</dbReference>
<dbReference type="InterPro" id="IPR019833">
    <property type="entry name" value="Mn/Fe_SOD_BS"/>
</dbReference>
<dbReference type="InterPro" id="IPR019832">
    <property type="entry name" value="Mn/Fe_SOD_C"/>
</dbReference>
<dbReference type="InterPro" id="IPR019831">
    <property type="entry name" value="Mn/Fe_SOD_N"/>
</dbReference>
<dbReference type="InterPro" id="IPR036324">
    <property type="entry name" value="Mn/Fe_SOD_N_sf"/>
</dbReference>
<dbReference type="InterPro" id="IPR036314">
    <property type="entry name" value="SOD_C_sf"/>
</dbReference>
<dbReference type="PANTHER" id="PTHR43595">
    <property type="entry name" value="37S RIBOSOMAL PROTEIN S26, MITOCHONDRIAL"/>
    <property type="match status" value="1"/>
</dbReference>
<dbReference type="PANTHER" id="PTHR43595:SF2">
    <property type="entry name" value="SMALL RIBOSOMAL SUBUNIT PROTEIN MS42"/>
    <property type="match status" value="1"/>
</dbReference>
<dbReference type="Pfam" id="PF02777">
    <property type="entry name" value="Sod_Fe_C"/>
    <property type="match status" value="1"/>
</dbReference>
<dbReference type="Pfam" id="PF00081">
    <property type="entry name" value="Sod_Fe_N"/>
    <property type="match status" value="1"/>
</dbReference>
<dbReference type="PIRSF" id="PIRSF000349">
    <property type="entry name" value="SODismutase"/>
    <property type="match status" value="1"/>
</dbReference>
<dbReference type="PRINTS" id="PR01703">
    <property type="entry name" value="MNSODISMTASE"/>
</dbReference>
<dbReference type="SUPFAM" id="SSF54719">
    <property type="entry name" value="Fe,Mn superoxide dismutase (SOD), C-terminal domain"/>
    <property type="match status" value="1"/>
</dbReference>
<dbReference type="SUPFAM" id="SSF46609">
    <property type="entry name" value="Fe,Mn superoxide dismutase (SOD), N-terminal domain"/>
    <property type="match status" value="1"/>
</dbReference>
<dbReference type="PROSITE" id="PS00088">
    <property type="entry name" value="SOD_MN"/>
    <property type="match status" value="1"/>
</dbReference>
<evidence type="ECO:0000250" key="1"/>
<evidence type="ECO:0000305" key="2"/>
<reference key="1">
    <citation type="submission" date="1996-08" db="EMBL/GenBank/DDBJ databases">
        <authorList>
            <person name="Anderson A.J."/>
            <person name="Kim Y.C."/>
            <person name="Miller C.D."/>
        </authorList>
    </citation>
    <scope>NUCLEOTIDE SEQUENCE [GENOMIC DNA]</scope>
    <source>
        <strain>Corvallis</strain>
    </source>
</reference>
<gene>
    <name type="primary">sodA</name>
</gene>
<keyword id="KW-0464">Manganese</keyword>
<keyword id="KW-0479">Metal-binding</keyword>
<keyword id="KW-0560">Oxidoreductase</keyword>
<accession>P77929</accession>